<evidence type="ECO:0000255" key="1">
    <source>
        <dbReference type="HAMAP-Rule" id="MF_02210"/>
    </source>
</evidence>
<evidence type="ECO:0000305" key="2"/>
<proteinExistence type="inferred from homology"/>
<sequence length="146" mass="16745">MSIISQIEACDFERLYEIEQQAHLVPWSFGTLKNNQGERYLNLKLIENNQIIGFAICQTVLDEATLFNIAILPTYQGCGFGKLLLGKLIFQLKEKGVQTLWLEVRESNSARFLYEKIGFNEVDIRKNYYPKPSGGRENAVVMACYL</sequence>
<protein>
    <recommendedName>
        <fullName evidence="1">[Ribosomal protein bS18]-alanine N-acetyltransferase</fullName>
        <ecNumber evidence="1">2.3.1.266</ecNumber>
    </recommendedName>
</protein>
<keyword id="KW-0012">Acyltransferase</keyword>
<keyword id="KW-0963">Cytoplasm</keyword>
<keyword id="KW-1185">Reference proteome</keyword>
<keyword id="KW-0808">Transferase</keyword>
<comment type="function">
    <text evidence="1">Acetylates the N-terminal alanine of ribosomal protein bS18.</text>
</comment>
<comment type="catalytic activity">
    <reaction evidence="1">
        <text>N-terminal L-alanyl-[ribosomal protein bS18] + acetyl-CoA = N-terminal N(alpha)-acetyl-L-alanyl-[ribosomal protein bS18] + CoA + H(+)</text>
        <dbReference type="Rhea" id="RHEA:43756"/>
        <dbReference type="Rhea" id="RHEA-COMP:10676"/>
        <dbReference type="Rhea" id="RHEA-COMP:10677"/>
        <dbReference type="ChEBI" id="CHEBI:15378"/>
        <dbReference type="ChEBI" id="CHEBI:57287"/>
        <dbReference type="ChEBI" id="CHEBI:57288"/>
        <dbReference type="ChEBI" id="CHEBI:64718"/>
        <dbReference type="ChEBI" id="CHEBI:83683"/>
        <dbReference type="EC" id="2.3.1.266"/>
    </reaction>
</comment>
<comment type="subcellular location">
    <subcellularLocation>
        <location evidence="1">Cytoplasm</location>
    </subcellularLocation>
</comment>
<comment type="similarity">
    <text evidence="1 2">Belongs to the acetyltransferase family. RimI subfamily.</text>
</comment>
<gene>
    <name evidence="1" type="primary">rimI</name>
    <name type="ordered locus">HI_0010</name>
</gene>
<organism>
    <name type="scientific">Haemophilus influenzae (strain ATCC 51907 / DSM 11121 / KW20 / Rd)</name>
    <dbReference type="NCBI Taxonomy" id="71421"/>
    <lineage>
        <taxon>Bacteria</taxon>
        <taxon>Pseudomonadati</taxon>
        <taxon>Pseudomonadota</taxon>
        <taxon>Gammaproteobacteria</taxon>
        <taxon>Pasteurellales</taxon>
        <taxon>Pasteurellaceae</taxon>
        <taxon>Haemophilus</taxon>
    </lineage>
</organism>
<feature type="chain" id="PRO_0000074565" description="[Ribosomal protein bS18]-alanine N-acetyltransferase">
    <location>
        <begin position="1"/>
        <end position="146"/>
    </location>
</feature>
<feature type="domain" description="N-acetyltransferase" evidence="1">
    <location>
        <begin position="2"/>
        <end position="146"/>
    </location>
</feature>
<feature type="active site" description="Proton acceptor" evidence="1">
    <location>
        <position position="103"/>
    </location>
</feature>
<feature type="active site" description="Proton donor" evidence="1">
    <location>
        <position position="114"/>
    </location>
</feature>
<feature type="binding site" evidence="1">
    <location>
        <begin position="69"/>
        <end position="71"/>
    </location>
    <ligand>
        <name>acetyl-CoA</name>
        <dbReference type="ChEBI" id="CHEBI:57288"/>
    </ligand>
</feature>
<feature type="binding site" evidence="1">
    <location>
        <position position="108"/>
    </location>
    <ligand>
        <name>acetyl-CoA</name>
        <dbReference type="ChEBI" id="CHEBI:57288"/>
    </ligand>
</feature>
<name>RIMI_HAEIN</name>
<dbReference type="EC" id="2.3.1.266" evidence="1"/>
<dbReference type="EMBL" id="L42023">
    <property type="protein sequence ID" value="AAC21688.1"/>
    <property type="molecule type" value="Genomic_DNA"/>
</dbReference>
<dbReference type="RefSeq" id="NP_438183.1">
    <property type="nucleotide sequence ID" value="NC_000907.1"/>
</dbReference>
<dbReference type="SMR" id="P44305"/>
<dbReference type="STRING" id="71421.HI_0010"/>
<dbReference type="EnsemblBacteria" id="AAC21688">
    <property type="protein sequence ID" value="AAC21688"/>
    <property type="gene ID" value="HI_0010"/>
</dbReference>
<dbReference type="KEGG" id="hin:HI_0010"/>
<dbReference type="PATRIC" id="fig|71421.8.peg.10"/>
<dbReference type="eggNOG" id="COG0456">
    <property type="taxonomic scope" value="Bacteria"/>
</dbReference>
<dbReference type="HOGENOM" id="CLU_013985_23_2_6"/>
<dbReference type="OrthoDB" id="9796919at2"/>
<dbReference type="PhylomeDB" id="P44305"/>
<dbReference type="BioCyc" id="HINF71421:G1GJ1-10-MONOMER"/>
<dbReference type="Proteomes" id="UP000000579">
    <property type="component" value="Chromosome"/>
</dbReference>
<dbReference type="GO" id="GO:0005737">
    <property type="term" value="C:cytoplasm"/>
    <property type="evidence" value="ECO:0007669"/>
    <property type="project" value="UniProtKB-SubCell"/>
</dbReference>
<dbReference type="GO" id="GO:0008999">
    <property type="term" value="F:protein-N-terminal-alanine acetyltransferase activity"/>
    <property type="evidence" value="ECO:0000318"/>
    <property type="project" value="GO_Central"/>
</dbReference>
<dbReference type="CDD" id="cd04301">
    <property type="entry name" value="NAT_SF"/>
    <property type="match status" value="1"/>
</dbReference>
<dbReference type="FunFam" id="3.40.630.30:FF:000018">
    <property type="entry name" value="[Ribosomal protein S18]-alanine N-acetyltransferase"/>
    <property type="match status" value="1"/>
</dbReference>
<dbReference type="Gene3D" id="3.40.630.30">
    <property type="match status" value="1"/>
</dbReference>
<dbReference type="HAMAP" id="MF_02210">
    <property type="entry name" value="RimI"/>
    <property type="match status" value="1"/>
</dbReference>
<dbReference type="InterPro" id="IPR006464">
    <property type="entry name" value="AcTrfase_RimI/Ard1"/>
</dbReference>
<dbReference type="InterPro" id="IPR016181">
    <property type="entry name" value="Acyl_CoA_acyltransferase"/>
</dbReference>
<dbReference type="InterPro" id="IPR000182">
    <property type="entry name" value="GNAT_dom"/>
</dbReference>
<dbReference type="InterPro" id="IPR043690">
    <property type="entry name" value="RimI"/>
</dbReference>
<dbReference type="InterPro" id="IPR050680">
    <property type="entry name" value="YpeA/RimI_acetyltransf"/>
</dbReference>
<dbReference type="NCBIfam" id="NF007025">
    <property type="entry name" value="PRK09491.1"/>
    <property type="match status" value="1"/>
</dbReference>
<dbReference type="NCBIfam" id="TIGR01575">
    <property type="entry name" value="rimI"/>
    <property type="match status" value="1"/>
</dbReference>
<dbReference type="PANTHER" id="PTHR43420">
    <property type="entry name" value="ACETYLTRANSFERASE"/>
    <property type="match status" value="1"/>
</dbReference>
<dbReference type="PANTHER" id="PTHR43420:SF44">
    <property type="entry name" value="ACETYLTRANSFERASE YPEA"/>
    <property type="match status" value="1"/>
</dbReference>
<dbReference type="Pfam" id="PF00583">
    <property type="entry name" value="Acetyltransf_1"/>
    <property type="match status" value="1"/>
</dbReference>
<dbReference type="SUPFAM" id="SSF55729">
    <property type="entry name" value="Acyl-CoA N-acyltransferases (Nat)"/>
    <property type="match status" value="1"/>
</dbReference>
<dbReference type="PROSITE" id="PS51186">
    <property type="entry name" value="GNAT"/>
    <property type="match status" value="1"/>
</dbReference>
<reference key="1">
    <citation type="journal article" date="1995" name="Science">
        <title>Whole-genome random sequencing and assembly of Haemophilus influenzae Rd.</title>
        <authorList>
            <person name="Fleischmann R.D."/>
            <person name="Adams M.D."/>
            <person name="White O."/>
            <person name="Clayton R.A."/>
            <person name="Kirkness E.F."/>
            <person name="Kerlavage A.R."/>
            <person name="Bult C.J."/>
            <person name="Tomb J.-F."/>
            <person name="Dougherty B.A."/>
            <person name="Merrick J.M."/>
            <person name="McKenney K."/>
            <person name="Sutton G.G."/>
            <person name="FitzHugh W."/>
            <person name="Fields C.A."/>
            <person name="Gocayne J.D."/>
            <person name="Scott J.D."/>
            <person name="Shirley R."/>
            <person name="Liu L.-I."/>
            <person name="Glodek A."/>
            <person name="Kelley J.M."/>
            <person name="Weidman J.F."/>
            <person name="Phillips C.A."/>
            <person name="Spriggs T."/>
            <person name="Hedblom E."/>
            <person name="Cotton M.D."/>
            <person name="Utterback T.R."/>
            <person name="Hanna M.C."/>
            <person name="Nguyen D.T."/>
            <person name="Saudek D.M."/>
            <person name="Brandon R.C."/>
            <person name="Fine L.D."/>
            <person name="Fritchman J.L."/>
            <person name="Fuhrmann J.L."/>
            <person name="Geoghagen N.S.M."/>
            <person name="Gnehm C.L."/>
            <person name="McDonald L.A."/>
            <person name="Small K.V."/>
            <person name="Fraser C.M."/>
            <person name="Smith H.O."/>
            <person name="Venter J.C."/>
        </authorList>
    </citation>
    <scope>NUCLEOTIDE SEQUENCE [LARGE SCALE GENOMIC DNA]</scope>
    <source>
        <strain>ATCC 51907 / DSM 11121 / KW20 / Rd</strain>
    </source>
</reference>
<accession>P44305</accession>